<gene>
    <name evidence="1" type="primary">pyrG</name>
    <name type="ordered locus">Oant_2054</name>
</gene>
<reference key="1">
    <citation type="journal article" date="2011" name="J. Bacteriol.">
        <title>Genome of Ochrobactrum anthropi ATCC 49188 T, a versatile opportunistic pathogen and symbiont of several eukaryotic hosts.</title>
        <authorList>
            <person name="Chain P.S."/>
            <person name="Lang D.M."/>
            <person name="Comerci D.J."/>
            <person name="Malfatti S.A."/>
            <person name="Vergez L.M."/>
            <person name="Shin M."/>
            <person name="Ugalde R.A."/>
            <person name="Garcia E."/>
            <person name="Tolmasky M.E."/>
        </authorList>
    </citation>
    <scope>NUCLEOTIDE SEQUENCE [LARGE SCALE GENOMIC DNA]</scope>
    <source>
        <strain>ATCC 49188 / DSM 6882 / CCUG 24695 / JCM 21032 / LMG 3331 / NBRC 15819 / NCTC 12168 / Alc 37</strain>
    </source>
</reference>
<sequence length="542" mass="60006">MARYVFITGGVVSSLGKGIAAAALAALLQARGYRVRIRKLDPYLNVDPGTMSPYQHGEVFVTDDGAETDLDLGHYERFTGRPANQQDNITTGRIYRNIIEKERRGDYLGATVQVIPHVTDEIKNFVLEGNEDYDFVLCEIGGTVGDIEAMPFLEAIRQLGNELPRGTAVYIHLTLMPYIPAAGELKTKPTQHSVKELRSIGIAPDILLVRADREIPESERRKLSLFCNVRESAVIQALDVATIYDVPIAYHKEGLDSEVLSAFGIDPAPKPRMDRWEEVSNRLHNPEGEVTIAIVGKYTGLKDAYKSLIEALYHGGLANKVKVNLDWIEAEVFESEDPAPYLEKVHGILVPGGFGERGAEGKILAAKFARERKVPYFGICFGMQMACIEAARNLVGIENASSTEFGPTKEPVVGLMTEWLKGNMLEKRASAGDLGGTMRLGAYEAALKSGSKIAEIYGSTDISERHRHRYEVNIDYKERLESAGLNFAGMSPDGVLPETVEYPDHPWFIGVQYHPELKSRPFEPHPLFASFIEAAIEQSRLV</sequence>
<proteinExistence type="inferred from homology"/>
<name>PYRG_BRUA4</name>
<feature type="chain" id="PRO_1000139509" description="CTP synthase">
    <location>
        <begin position="1"/>
        <end position="542"/>
    </location>
</feature>
<feature type="domain" description="Glutamine amidotransferase type-1" evidence="1">
    <location>
        <begin position="291"/>
        <end position="541"/>
    </location>
</feature>
<feature type="region of interest" description="Amidoligase domain" evidence="1">
    <location>
        <begin position="1"/>
        <end position="265"/>
    </location>
</feature>
<feature type="active site" description="Nucleophile; for glutamine hydrolysis" evidence="1">
    <location>
        <position position="380"/>
    </location>
</feature>
<feature type="active site" evidence="1">
    <location>
        <position position="514"/>
    </location>
</feature>
<feature type="active site" evidence="1">
    <location>
        <position position="516"/>
    </location>
</feature>
<feature type="binding site" evidence="1">
    <location>
        <position position="13"/>
    </location>
    <ligand>
        <name>CTP</name>
        <dbReference type="ChEBI" id="CHEBI:37563"/>
        <note>allosteric inhibitor</note>
    </ligand>
</feature>
<feature type="binding site" evidence="1">
    <location>
        <position position="13"/>
    </location>
    <ligand>
        <name>UTP</name>
        <dbReference type="ChEBI" id="CHEBI:46398"/>
    </ligand>
</feature>
<feature type="binding site" evidence="1">
    <location>
        <begin position="14"/>
        <end position="19"/>
    </location>
    <ligand>
        <name>ATP</name>
        <dbReference type="ChEBI" id="CHEBI:30616"/>
    </ligand>
</feature>
<feature type="binding site" evidence="1">
    <location>
        <position position="54"/>
    </location>
    <ligand>
        <name>L-glutamine</name>
        <dbReference type="ChEBI" id="CHEBI:58359"/>
    </ligand>
</feature>
<feature type="binding site" evidence="1">
    <location>
        <position position="71"/>
    </location>
    <ligand>
        <name>ATP</name>
        <dbReference type="ChEBI" id="CHEBI:30616"/>
    </ligand>
</feature>
<feature type="binding site" evidence="1">
    <location>
        <position position="71"/>
    </location>
    <ligand>
        <name>Mg(2+)</name>
        <dbReference type="ChEBI" id="CHEBI:18420"/>
    </ligand>
</feature>
<feature type="binding site" evidence="1">
    <location>
        <position position="139"/>
    </location>
    <ligand>
        <name>Mg(2+)</name>
        <dbReference type="ChEBI" id="CHEBI:18420"/>
    </ligand>
</feature>
<feature type="binding site" evidence="1">
    <location>
        <begin position="146"/>
        <end position="148"/>
    </location>
    <ligand>
        <name>CTP</name>
        <dbReference type="ChEBI" id="CHEBI:37563"/>
        <note>allosteric inhibitor</note>
    </ligand>
</feature>
<feature type="binding site" evidence="1">
    <location>
        <begin position="186"/>
        <end position="191"/>
    </location>
    <ligand>
        <name>CTP</name>
        <dbReference type="ChEBI" id="CHEBI:37563"/>
        <note>allosteric inhibitor</note>
    </ligand>
</feature>
<feature type="binding site" evidence="1">
    <location>
        <begin position="186"/>
        <end position="191"/>
    </location>
    <ligand>
        <name>UTP</name>
        <dbReference type="ChEBI" id="CHEBI:46398"/>
    </ligand>
</feature>
<feature type="binding site" evidence="1">
    <location>
        <position position="222"/>
    </location>
    <ligand>
        <name>CTP</name>
        <dbReference type="ChEBI" id="CHEBI:37563"/>
        <note>allosteric inhibitor</note>
    </ligand>
</feature>
<feature type="binding site" evidence="1">
    <location>
        <position position="222"/>
    </location>
    <ligand>
        <name>UTP</name>
        <dbReference type="ChEBI" id="CHEBI:46398"/>
    </ligand>
</feature>
<feature type="binding site" evidence="1">
    <location>
        <position position="353"/>
    </location>
    <ligand>
        <name>L-glutamine</name>
        <dbReference type="ChEBI" id="CHEBI:58359"/>
    </ligand>
</feature>
<feature type="binding site" evidence="1">
    <location>
        <begin position="381"/>
        <end position="384"/>
    </location>
    <ligand>
        <name>L-glutamine</name>
        <dbReference type="ChEBI" id="CHEBI:58359"/>
    </ligand>
</feature>
<feature type="binding site" evidence="1">
    <location>
        <position position="404"/>
    </location>
    <ligand>
        <name>L-glutamine</name>
        <dbReference type="ChEBI" id="CHEBI:58359"/>
    </ligand>
</feature>
<feature type="binding site" evidence="1">
    <location>
        <position position="469"/>
    </location>
    <ligand>
        <name>L-glutamine</name>
        <dbReference type="ChEBI" id="CHEBI:58359"/>
    </ligand>
</feature>
<keyword id="KW-0067">ATP-binding</keyword>
<keyword id="KW-0315">Glutamine amidotransferase</keyword>
<keyword id="KW-0436">Ligase</keyword>
<keyword id="KW-0460">Magnesium</keyword>
<keyword id="KW-0479">Metal-binding</keyword>
<keyword id="KW-0547">Nucleotide-binding</keyword>
<keyword id="KW-0665">Pyrimidine biosynthesis</keyword>
<keyword id="KW-1185">Reference proteome</keyword>
<organism>
    <name type="scientific">Brucella anthropi (strain ATCC 49188 / DSM 6882 / CCUG 24695 / JCM 21032 / LMG 3331 / NBRC 15819 / NCTC 12168 / Alc 37)</name>
    <name type="common">Ochrobactrum anthropi</name>
    <dbReference type="NCBI Taxonomy" id="439375"/>
    <lineage>
        <taxon>Bacteria</taxon>
        <taxon>Pseudomonadati</taxon>
        <taxon>Pseudomonadota</taxon>
        <taxon>Alphaproteobacteria</taxon>
        <taxon>Hyphomicrobiales</taxon>
        <taxon>Brucellaceae</taxon>
        <taxon>Brucella/Ochrobactrum group</taxon>
        <taxon>Brucella</taxon>
    </lineage>
</organism>
<dbReference type="EC" id="6.3.4.2" evidence="1"/>
<dbReference type="EMBL" id="CP000758">
    <property type="protein sequence ID" value="ABS14770.1"/>
    <property type="molecule type" value="Genomic_DNA"/>
</dbReference>
<dbReference type="RefSeq" id="WP_010660001.1">
    <property type="nucleotide sequence ID" value="NC_009667.1"/>
</dbReference>
<dbReference type="SMR" id="A6X0L6"/>
<dbReference type="STRING" id="439375.Oant_2054"/>
<dbReference type="MEROPS" id="C26.964"/>
<dbReference type="KEGG" id="oan:Oant_2054"/>
<dbReference type="eggNOG" id="COG0504">
    <property type="taxonomic scope" value="Bacteria"/>
</dbReference>
<dbReference type="HOGENOM" id="CLU_011675_5_0_5"/>
<dbReference type="PhylomeDB" id="A6X0L6"/>
<dbReference type="UniPathway" id="UPA00159">
    <property type="reaction ID" value="UER00277"/>
</dbReference>
<dbReference type="Proteomes" id="UP000002301">
    <property type="component" value="Chromosome 1"/>
</dbReference>
<dbReference type="GO" id="GO:0005829">
    <property type="term" value="C:cytosol"/>
    <property type="evidence" value="ECO:0007669"/>
    <property type="project" value="TreeGrafter"/>
</dbReference>
<dbReference type="GO" id="GO:0005524">
    <property type="term" value="F:ATP binding"/>
    <property type="evidence" value="ECO:0007669"/>
    <property type="project" value="UniProtKB-KW"/>
</dbReference>
<dbReference type="GO" id="GO:0003883">
    <property type="term" value="F:CTP synthase activity"/>
    <property type="evidence" value="ECO:0007669"/>
    <property type="project" value="UniProtKB-UniRule"/>
</dbReference>
<dbReference type="GO" id="GO:0004359">
    <property type="term" value="F:glutaminase activity"/>
    <property type="evidence" value="ECO:0007669"/>
    <property type="project" value="RHEA"/>
</dbReference>
<dbReference type="GO" id="GO:0042802">
    <property type="term" value="F:identical protein binding"/>
    <property type="evidence" value="ECO:0007669"/>
    <property type="project" value="TreeGrafter"/>
</dbReference>
<dbReference type="GO" id="GO:0046872">
    <property type="term" value="F:metal ion binding"/>
    <property type="evidence" value="ECO:0007669"/>
    <property type="project" value="UniProtKB-KW"/>
</dbReference>
<dbReference type="GO" id="GO:0044210">
    <property type="term" value="P:'de novo' CTP biosynthetic process"/>
    <property type="evidence" value="ECO:0007669"/>
    <property type="project" value="UniProtKB-UniRule"/>
</dbReference>
<dbReference type="GO" id="GO:0019856">
    <property type="term" value="P:pyrimidine nucleobase biosynthetic process"/>
    <property type="evidence" value="ECO:0007669"/>
    <property type="project" value="TreeGrafter"/>
</dbReference>
<dbReference type="CDD" id="cd03113">
    <property type="entry name" value="CTPS_N"/>
    <property type="match status" value="1"/>
</dbReference>
<dbReference type="CDD" id="cd01746">
    <property type="entry name" value="GATase1_CTP_Synthase"/>
    <property type="match status" value="1"/>
</dbReference>
<dbReference type="FunFam" id="3.40.50.300:FF:000009">
    <property type="entry name" value="CTP synthase"/>
    <property type="match status" value="1"/>
</dbReference>
<dbReference type="FunFam" id="3.40.50.880:FF:000002">
    <property type="entry name" value="CTP synthase"/>
    <property type="match status" value="1"/>
</dbReference>
<dbReference type="Gene3D" id="3.40.50.880">
    <property type="match status" value="1"/>
</dbReference>
<dbReference type="Gene3D" id="3.40.50.300">
    <property type="entry name" value="P-loop containing nucleotide triphosphate hydrolases"/>
    <property type="match status" value="1"/>
</dbReference>
<dbReference type="HAMAP" id="MF_01227">
    <property type="entry name" value="PyrG"/>
    <property type="match status" value="1"/>
</dbReference>
<dbReference type="InterPro" id="IPR029062">
    <property type="entry name" value="Class_I_gatase-like"/>
</dbReference>
<dbReference type="InterPro" id="IPR004468">
    <property type="entry name" value="CTP_synthase"/>
</dbReference>
<dbReference type="InterPro" id="IPR017456">
    <property type="entry name" value="CTP_synthase_N"/>
</dbReference>
<dbReference type="InterPro" id="IPR017926">
    <property type="entry name" value="GATASE"/>
</dbReference>
<dbReference type="InterPro" id="IPR033828">
    <property type="entry name" value="GATase1_CTP_Synthase"/>
</dbReference>
<dbReference type="InterPro" id="IPR027417">
    <property type="entry name" value="P-loop_NTPase"/>
</dbReference>
<dbReference type="NCBIfam" id="NF003792">
    <property type="entry name" value="PRK05380.1"/>
    <property type="match status" value="1"/>
</dbReference>
<dbReference type="NCBIfam" id="TIGR00337">
    <property type="entry name" value="PyrG"/>
    <property type="match status" value="1"/>
</dbReference>
<dbReference type="PANTHER" id="PTHR11550">
    <property type="entry name" value="CTP SYNTHASE"/>
    <property type="match status" value="1"/>
</dbReference>
<dbReference type="PANTHER" id="PTHR11550:SF0">
    <property type="entry name" value="CTP SYNTHASE-RELATED"/>
    <property type="match status" value="1"/>
</dbReference>
<dbReference type="Pfam" id="PF06418">
    <property type="entry name" value="CTP_synth_N"/>
    <property type="match status" value="1"/>
</dbReference>
<dbReference type="Pfam" id="PF00117">
    <property type="entry name" value="GATase"/>
    <property type="match status" value="1"/>
</dbReference>
<dbReference type="SUPFAM" id="SSF52317">
    <property type="entry name" value="Class I glutamine amidotransferase-like"/>
    <property type="match status" value="1"/>
</dbReference>
<dbReference type="SUPFAM" id="SSF52540">
    <property type="entry name" value="P-loop containing nucleoside triphosphate hydrolases"/>
    <property type="match status" value="1"/>
</dbReference>
<dbReference type="PROSITE" id="PS51273">
    <property type="entry name" value="GATASE_TYPE_1"/>
    <property type="match status" value="1"/>
</dbReference>
<evidence type="ECO:0000255" key="1">
    <source>
        <dbReference type="HAMAP-Rule" id="MF_01227"/>
    </source>
</evidence>
<accession>A6X0L6</accession>
<comment type="function">
    <text evidence="1">Catalyzes the ATP-dependent amination of UTP to CTP with either L-glutamine or ammonia as the source of nitrogen. Regulates intracellular CTP levels through interactions with the four ribonucleotide triphosphates.</text>
</comment>
<comment type="catalytic activity">
    <reaction evidence="1">
        <text>UTP + L-glutamine + ATP + H2O = CTP + L-glutamate + ADP + phosphate + 2 H(+)</text>
        <dbReference type="Rhea" id="RHEA:26426"/>
        <dbReference type="ChEBI" id="CHEBI:15377"/>
        <dbReference type="ChEBI" id="CHEBI:15378"/>
        <dbReference type="ChEBI" id="CHEBI:29985"/>
        <dbReference type="ChEBI" id="CHEBI:30616"/>
        <dbReference type="ChEBI" id="CHEBI:37563"/>
        <dbReference type="ChEBI" id="CHEBI:43474"/>
        <dbReference type="ChEBI" id="CHEBI:46398"/>
        <dbReference type="ChEBI" id="CHEBI:58359"/>
        <dbReference type="ChEBI" id="CHEBI:456216"/>
        <dbReference type="EC" id="6.3.4.2"/>
    </reaction>
</comment>
<comment type="catalytic activity">
    <reaction evidence="1">
        <text>L-glutamine + H2O = L-glutamate + NH4(+)</text>
        <dbReference type="Rhea" id="RHEA:15889"/>
        <dbReference type="ChEBI" id="CHEBI:15377"/>
        <dbReference type="ChEBI" id="CHEBI:28938"/>
        <dbReference type="ChEBI" id="CHEBI:29985"/>
        <dbReference type="ChEBI" id="CHEBI:58359"/>
    </reaction>
</comment>
<comment type="catalytic activity">
    <reaction evidence="1">
        <text>UTP + NH4(+) + ATP = CTP + ADP + phosphate + 2 H(+)</text>
        <dbReference type="Rhea" id="RHEA:16597"/>
        <dbReference type="ChEBI" id="CHEBI:15378"/>
        <dbReference type="ChEBI" id="CHEBI:28938"/>
        <dbReference type="ChEBI" id="CHEBI:30616"/>
        <dbReference type="ChEBI" id="CHEBI:37563"/>
        <dbReference type="ChEBI" id="CHEBI:43474"/>
        <dbReference type="ChEBI" id="CHEBI:46398"/>
        <dbReference type="ChEBI" id="CHEBI:456216"/>
    </reaction>
</comment>
<comment type="activity regulation">
    <text evidence="1">Allosterically activated by GTP, when glutamine is the substrate; GTP has no effect on the reaction when ammonia is the substrate. The allosteric effector GTP functions by stabilizing the protein conformation that binds the tetrahedral intermediate(s) formed during glutamine hydrolysis. Inhibited by the product CTP, via allosteric rather than competitive inhibition.</text>
</comment>
<comment type="pathway">
    <text evidence="1">Pyrimidine metabolism; CTP biosynthesis via de novo pathway; CTP from UDP: step 2/2.</text>
</comment>
<comment type="subunit">
    <text evidence="1">Homotetramer.</text>
</comment>
<comment type="miscellaneous">
    <text evidence="1">CTPSs have evolved a hybrid strategy for distinguishing between UTP and CTP. The overlapping regions of the product feedback inhibitory and substrate sites recognize a common feature in both compounds, the triphosphate moiety. To differentiate isosteric substrate and product pyrimidine rings, an additional pocket far from the expected kinase/ligase catalytic site, specifically recognizes the cytosine and ribose portions of the product inhibitor.</text>
</comment>
<comment type="similarity">
    <text evidence="1">Belongs to the CTP synthase family.</text>
</comment>
<protein>
    <recommendedName>
        <fullName evidence="1">CTP synthase</fullName>
        <ecNumber evidence="1">6.3.4.2</ecNumber>
    </recommendedName>
    <alternativeName>
        <fullName evidence="1">Cytidine 5'-triphosphate synthase</fullName>
    </alternativeName>
    <alternativeName>
        <fullName evidence="1">Cytidine triphosphate synthetase</fullName>
        <shortName evidence="1">CTP synthetase</shortName>
        <shortName evidence="1">CTPS</shortName>
    </alternativeName>
    <alternativeName>
        <fullName evidence="1">UTP--ammonia ligase</fullName>
    </alternativeName>
</protein>